<proteinExistence type="inferred from homology"/>
<reference key="1">
    <citation type="journal article" date="2005" name="Proc. Natl. Acad. Sci. U.S.A.">
        <title>Complete genome sequence of Vibrio fischeri: a symbiotic bacterium with pathogenic congeners.</title>
        <authorList>
            <person name="Ruby E.G."/>
            <person name="Urbanowski M."/>
            <person name="Campbell J."/>
            <person name="Dunn A."/>
            <person name="Faini M."/>
            <person name="Gunsalus R."/>
            <person name="Lostroh P."/>
            <person name="Lupp C."/>
            <person name="McCann J."/>
            <person name="Millikan D."/>
            <person name="Schaefer A."/>
            <person name="Stabb E."/>
            <person name="Stevens A."/>
            <person name="Visick K."/>
            <person name="Whistler C."/>
            <person name="Greenberg E.P."/>
        </authorList>
    </citation>
    <scope>NUCLEOTIDE SEQUENCE [LARGE SCALE GENOMIC DNA]</scope>
    <source>
        <strain>ATCC 700601 / ES114</strain>
    </source>
</reference>
<accession>Q5E2F9</accession>
<organism>
    <name type="scientific">Aliivibrio fischeri (strain ATCC 700601 / ES114)</name>
    <name type="common">Vibrio fischeri</name>
    <dbReference type="NCBI Taxonomy" id="312309"/>
    <lineage>
        <taxon>Bacteria</taxon>
        <taxon>Pseudomonadati</taxon>
        <taxon>Pseudomonadota</taxon>
        <taxon>Gammaproteobacteria</taxon>
        <taxon>Vibrionales</taxon>
        <taxon>Vibrionaceae</taxon>
        <taxon>Aliivibrio</taxon>
    </lineage>
</organism>
<gene>
    <name evidence="1" type="primary">aroK</name>
    <name type="ordered locus">VF_2292</name>
</gene>
<keyword id="KW-0028">Amino-acid biosynthesis</keyword>
<keyword id="KW-0057">Aromatic amino acid biosynthesis</keyword>
<keyword id="KW-0067">ATP-binding</keyword>
<keyword id="KW-0963">Cytoplasm</keyword>
<keyword id="KW-0418">Kinase</keyword>
<keyword id="KW-0460">Magnesium</keyword>
<keyword id="KW-0479">Metal-binding</keyword>
<keyword id="KW-0547">Nucleotide-binding</keyword>
<keyword id="KW-1185">Reference proteome</keyword>
<keyword id="KW-0808">Transferase</keyword>
<feature type="chain" id="PRO_0000237956" description="Shikimate kinase">
    <location>
        <begin position="1"/>
        <end position="172"/>
    </location>
</feature>
<feature type="binding site" evidence="1">
    <location>
        <begin position="14"/>
        <end position="19"/>
    </location>
    <ligand>
        <name>ATP</name>
        <dbReference type="ChEBI" id="CHEBI:30616"/>
    </ligand>
</feature>
<feature type="binding site" evidence="1">
    <location>
        <position position="18"/>
    </location>
    <ligand>
        <name>Mg(2+)</name>
        <dbReference type="ChEBI" id="CHEBI:18420"/>
    </ligand>
</feature>
<feature type="binding site" evidence="1">
    <location>
        <position position="36"/>
    </location>
    <ligand>
        <name>substrate</name>
    </ligand>
</feature>
<feature type="binding site" evidence="1">
    <location>
        <position position="60"/>
    </location>
    <ligand>
        <name>substrate</name>
    </ligand>
</feature>
<feature type="binding site" evidence="1">
    <location>
        <position position="82"/>
    </location>
    <ligand>
        <name>substrate</name>
    </ligand>
</feature>
<feature type="binding site" evidence="1">
    <location>
        <position position="120"/>
    </location>
    <ligand>
        <name>ATP</name>
        <dbReference type="ChEBI" id="CHEBI:30616"/>
    </ligand>
</feature>
<feature type="binding site" evidence="1">
    <location>
        <position position="139"/>
    </location>
    <ligand>
        <name>substrate</name>
    </ligand>
</feature>
<feature type="binding site" evidence="1">
    <location>
        <position position="156"/>
    </location>
    <ligand>
        <name>ATP</name>
        <dbReference type="ChEBI" id="CHEBI:30616"/>
    </ligand>
</feature>
<name>AROK_ALIF1</name>
<evidence type="ECO:0000255" key="1">
    <source>
        <dbReference type="HAMAP-Rule" id="MF_00109"/>
    </source>
</evidence>
<sequence length="172" mass="19372">MAEKRNIFLVGPMGAGKSTIGRHLAQQLHMEFLDSDTVIEERTGADIAWVFDVEGEEGFRKREEGVINDLTQEQGIVLATGGGSVISKESRNRLSARGVVVYLETTIEKQLARTQRDKKRPLLQTDEPREVLEALAKERNALYEEVSDYVVRTDDQSAKVVANQIIQMLEER</sequence>
<dbReference type="EC" id="2.7.1.71" evidence="1"/>
<dbReference type="EMBL" id="CP000020">
    <property type="protein sequence ID" value="AAW86787.1"/>
    <property type="molecule type" value="Genomic_DNA"/>
</dbReference>
<dbReference type="RefSeq" id="WP_005421091.1">
    <property type="nucleotide sequence ID" value="NZ_CAWLES010000001.1"/>
</dbReference>
<dbReference type="RefSeq" id="YP_205675.1">
    <property type="nucleotide sequence ID" value="NC_006840.2"/>
</dbReference>
<dbReference type="SMR" id="Q5E2F9"/>
<dbReference type="STRING" id="312309.VF_2292"/>
<dbReference type="EnsemblBacteria" id="AAW86787">
    <property type="protein sequence ID" value="AAW86787"/>
    <property type="gene ID" value="VF_2292"/>
</dbReference>
<dbReference type="GeneID" id="54165007"/>
<dbReference type="KEGG" id="vfi:VF_2292"/>
<dbReference type="PATRIC" id="fig|312309.11.peg.2330"/>
<dbReference type="eggNOG" id="COG0703">
    <property type="taxonomic scope" value="Bacteria"/>
</dbReference>
<dbReference type="HOGENOM" id="CLU_057607_2_2_6"/>
<dbReference type="OrthoDB" id="9800332at2"/>
<dbReference type="UniPathway" id="UPA00053">
    <property type="reaction ID" value="UER00088"/>
</dbReference>
<dbReference type="Proteomes" id="UP000000537">
    <property type="component" value="Chromosome I"/>
</dbReference>
<dbReference type="GO" id="GO:0005829">
    <property type="term" value="C:cytosol"/>
    <property type="evidence" value="ECO:0007669"/>
    <property type="project" value="TreeGrafter"/>
</dbReference>
<dbReference type="GO" id="GO:0005524">
    <property type="term" value="F:ATP binding"/>
    <property type="evidence" value="ECO:0007669"/>
    <property type="project" value="UniProtKB-UniRule"/>
</dbReference>
<dbReference type="GO" id="GO:0000287">
    <property type="term" value="F:magnesium ion binding"/>
    <property type="evidence" value="ECO:0007669"/>
    <property type="project" value="UniProtKB-UniRule"/>
</dbReference>
<dbReference type="GO" id="GO:0004765">
    <property type="term" value="F:shikimate kinase activity"/>
    <property type="evidence" value="ECO:0007669"/>
    <property type="project" value="UniProtKB-UniRule"/>
</dbReference>
<dbReference type="GO" id="GO:0008652">
    <property type="term" value="P:amino acid biosynthetic process"/>
    <property type="evidence" value="ECO:0007669"/>
    <property type="project" value="UniProtKB-KW"/>
</dbReference>
<dbReference type="GO" id="GO:0009073">
    <property type="term" value="P:aromatic amino acid family biosynthetic process"/>
    <property type="evidence" value="ECO:0007669"/>
    <property type="project" value="UniProtKB-KW"/>
</dbReference>
<dbReference type="GO" id="GO:0009423">
    <property type="term" value="P:chorismate biosynthetic process"/>
    <property type="evidence" value="ECO:0007669"/>
    <property type="project" value="UniProtKB-UniRule"/>
</dbReference>
<dbReference type="CDD" id="cd00464">
    <property type="entry name" value="SK"/>
    <property type="match status" value="1"/>
</dbReference>
<dbReference type="FunFam" id="3.40.50.300:FF:000099">
    <property type="entry name" value="Shikimate kinase 1"/>
    <property type="match status" value="1"/>
</dbReference>
<dbReference type="Gene3D" id="3.40.50.300">
    <property type="entry name" value="P-loop containing nucleotide triphosphate hydrolases"/>
    <property type="match status" value="1"/>
</dbReference>
<dbReference type="HAMAP" id="MF_00109">
    <property type="entry name" value="Shikimate_kinase"/>
    <property type="match status" value="1"/>
</dbReference>
<dbReference type="InterPro" id="IPR027417">
    <property type="entry name" value="P-loop_NTPase"/>
</dbReference>
<dbReference type="InterPro" id="IPR031322">
    <property type="entry name" value="Shikimate/glucono_kinase"/>
</dbReference>
<dbReference type="InterPro" id="IPR000623">
    <property type="entry name" value="Shikimate_kinase/TSH1"/>
</dbReference>
<dbReference type="InterPro" id="IPR023000">
    <property type="entry name" value="Shikimate_kinase_CS"/>
</dbReference>
<dbReference type="NCBIfam" id="NF003456">
    <property type="entry name" value="PRK05057.1"/>
    <property type="match status" value="1"/>
</dbReference>
<dbReference type="PANTHER" id="PTHR21087">
    <property type="entry name" value="SHIKIMATE KINASE"/>
    <property type="match status" value="1"/>
</dbReference>
<dbReference type="PANTHER" id="PTHR21087:SF16">
    <property type="entry name" value="SHIKIMATE KINASE 1, CHLOROPLASTIC"/>
    <property type="match status" value="1"/>
</dbReference>
<dbReference type="Pfam" id="PF01202">
    <property type="entry name" value="SKI"/>
    <property type="match status" value="1"/>
</dbReference>
<dbReference type="PRINTS" id="PR01100">
    <property type="entry name" value="SHIKIMTKNASE"/>
</dbReference>
<dbReference type="SUPFAM" id="SSF52540">
    <property type="entry name" value="P-loop containing nucleoside triphosphate hydrolases"/>
    <property type="match status" value="1"/>
</dbReference>
<dbReference type="PROSITE" id="PS01128">
    <property type="entry name" value="SHIKIMATE_KINASE"/>
    <property type="match status" value="1"/>
</dbReference>
<comment type="function">
    <text evidence="1">Catalyzes the specific phosphorylation of the 3-hydroxyl group of shikimic acid using ATP as a cosubstrate.</text>
</comment>
<comment type="catalytic activity">
    <reaction evidence="1">
        <text>shikimate + ATP = 3-phosphoshikimate + ADP + H(+)</text>
        <dbReference type="Rhea" id="RHEA:13121"/>
        <dbReference type="ChEBI" id="CHEBI:15378"/>
        <dbReference type="ChEBI" id="CHEBI:30616"/>
        <dbReference type="ChEBI" id="CHEBI:36208"/>
        <dbReference type="ChEBI" id="CHEBI:145989"/>
        <dbReference type="ChEBI" id="CHEBI:456216"/>
        <dbReference type="EC" id="2.7.1.71"/>
    </reaction>
</comment>
<comment type="cofactor">
    <cofactor evidence="1">
        <name>Mg(2+)</name>
        <dbReference type="ChEBI" id="CHEBI:18420"/>
    </cofactor>
    <text evidence="1">Binds 1 Mg(2+) ion per subunit.</text>
</comment>
<comment type="pathway">
    <text evidence="1">Metabolic intermediate biosynthesis; chorismate biosynthesis; chorismate from D-erythrose 4-phosphate and phosphoenolpyruvate: step 5/7.</text>
</comment>
<comment type="subunit">
    <text evidence="1">Monomer.</text>
</comment>
<comment type="subcellular location">
    <subcellularLocation>
        <location evidence="1">Cytoplasm</location>
    </subcellularLocation>
</comment>
<comment type="similarity">
    <text evidence="1">Belongs to the shikimate kinase family.</text>
</comment>
<protein>
    <recommendedName>
        <fullName evidence="1">Shikimate kinase</fullName>
        <shortName evidence="1">SK</shortName>
        <ecNumber evidence="1">2.7.1.71</ecNumber>
    </recommendedName>
</protein>